<organism>
    <name type="scientific">Danio rerio</name>
    <name type="common">Zebrafish</name>
    <name type="synonym">Brachydanio rerio</name>
    <dbReference type="NCBI Taxonomy" id="7955"/>
    <lineage>
        <taxon>Eukaryota</taxon>
        <taxon>Metazoa</taxon>
        <taxon>Chordata</taxon>
        <taxon>Craniata</taxon>
        <taxon>Vertebrata</taxon>
        <taxon>Euteleostomi</taxon>
        <taxon>Actinopterygii</taxon>
        <taxon>Neopterygii</taxon>
        <taxon>Teleostei</taxon>
        <taxon>Ostariophysi</taxon>
        <taxon>Cypriniformes</taxon>
        <taxon>Danionidae</taxon>
        <taxon>Danioninae</taxon>
        <taxon>Danio</taxon>
    </lineage>
</organism>
<protein>
    <recommendedName>
        <fullName>Homeobox protein BarH-like 1</fullName>
    </recommendedName>
    <alternativeName>
        <fullName>BarH-class homeodomain transcription factor 4</fullName>
    </alternativeName>
</protein>
<proteinExistence type="evidence at transcript level"/>
<evidence type="ECO:0000250" key="1"/>
<evidence type="ECO:0000255" key="2">
    <source>
        <dbReference type="PROSITE-ProRule" id="PRU00108"/>
    </source>
</evidence>
<evidence type="ECO:0000256" key="3">
    <source>
        <dbReference type="SAM" id="MobiDB-lite"/>
    </source>
</evidence>
<evidence type="ECO:0000305" key="4"/>
<name>BARX1_DANRE</name>
<dbReference type="EMBL" id="AY596188">
    <property type="protein sequence ID" value="AAU00060.1"/>
    <property type="molecule type" value="mRNA"/>
</dbReference>
<dbReference type="EMBL" id="BC095353">
    <property type="protein sequence ID" value="AAH95353.1"/>
    <property type="molecule type" value="mRNA"/>
</dbReference>
<dbReference type="EMBL" id="BC133991">
    <property type="protein sequence ID" value="AAI33992.1"/>
    <property type="molecule type" value="mRNA"/>
</dbReference>
<dbReference type="EMBL" id="BC162220">
    <property type="protein sequence ID" value="AAI62220.1"/>
    <property type="molecule type" value="mRNA"/>
</dbReference>
<dbReference type="EMBL" id="BC162228">
    <property type="protein sequence ID" value="AAI62228.1"/>
    <property type="molecule type" value="mRNA"/>
</dbReference>
<dbReference type="RefSeq" id="NP_001020120.1">
    <property type="nucleotide sequence ID" value="NM_001024949.1"/>
</dbReference>
<dbReference type="SMR" id="Q503F2"/>
<dbReference type="FunCoup" id="Q503F2">
    <property type="interactions" value="138"/>
</dbReference>
<dbReference type="STRING" id="7955.ENSDARP00000014797"/>
<dbReference type="PaxDb" id="7955-ENSDARP00000014797"/>
<dbReference type="GeneID" id="553644"/>
<dbReference type="KEGG" id="dre:553644"/>
<dbReference type="AGR" id="ZFIN:ZDB-GENE-050522-28"/>
<dbReference type="CTD" id="56033"/>
<dbReference type="ZFIN" id="ZDB-GENE-050522-28">
    <property type="gene designation" value="barx1"/>
</dbReference>
<dbReference type="eggNOG" id="KOG0488">
    <property type="taxonomic scope" value="Eukaryota"/>
</dbReference>
<dbReference type="InParanoid" id="Q503F2"/>
<dbReference type="OrthoDB" id="6159439at2759"/>
<dbReference type="PhylomeDB" id="Q503F2"/>
<dbReference type="TreeFam" id="TF350735"/>
<dbReference type="PRO" id="PR:Q503F2"/>
<dbReference type="Proteomes" id="UP000000437">
    <property type="component" value="Chromosome 11"/>
</dbReference>
<dbReference type="GO" id="GO:0005634">
    <property type="term" value="C:nucleus"/>
    <property type="evidence" value="ECO:0000318"/>
    <property type="project" value="GO_Central"/>
</dbReference>
<dbReference type="GO" id="GO:0000981">
    <property type="term" value="F:DNA-binding transcription factor activity, RNA polymerase II-specific"/>
    <property type="evidence" value="ECO:0000318"/>
    <property type="project" value="GO_Central"/>
</dbReference>
<dbReference type="GO" id="GO:0000977">
    <property type="term" value="F:RNA polymerase II transcription regulatory region sequence-specific DNA binding"/>
    <property type="evidence" value="ECO:0000318"/>
    <property type="project" value="GO_Central"/>
</dbReference>
<dbReference type="GO" id="GO:0051216">
    <property type="term" value="P:cartilage development"/>
    <property type="evidence" value="ECO:0000315"/>
    <property type="project" value="ZFIN"/>
</dbReference>
<dbReference type="GO" id="GO:0060037">
    <property type="term" value="P:pharyngeal system development"/>
    <property type="evidence" value="ECO:0000315"/>
    <property type="project" value="ZFIN"/>
</dbReference>
<dbReference type="GO" id="GO:0002053">
    <property type="term" value="P:positive regulation of mesenchymal cell proliferation"/>
    <property type="evidence" value="ECO:0000315"/>
    <property type="project" value="ZFIN"/>
</dbReference>
<dbReference type="GO" id="GO:0006357">
    <property type="term" value="P:regulation of transcription by RNA polymerase II"/>
    <property type="evidence" value="ECO:0000318"/>
    <property type="project" value="GO_Central"/>
</dbReference>
<dbReference type="CDD" id="cd00086">
    <property type="entry name" value="homeodomain"/>
    <property type="match status" value="1"/>
</dbReference>
<dbReference type="FunFam" id="1.10.10.60:FF:000103">
    <property type="entry name" value="Homeobox protein BarH-like 2"/>
    <property type="match status" value="1"/>
</dbReference>
<dbReference type="Gene3D" id="1.10.10.60">
    <property type="entry name" value="Homeodomain-like"/>
    <property type="match status" value="1"/>
</dbReference>
<dbReference type="InterPro" id="IPR001356">
    <property type="entry name" value="HD"/>
</dbReference>
<dbReference type="InterPro" id="IPR020479">
    <property type="entry name" value="HD_metazoa"/>
</dbReference>
<dbReference type="InterPro" id="IPR017970">
    <property type="entry name" value="Homeobox_CS"/>
</dbReference>
<dbReference type="InterPro" id="IPR050848">
    <property type="entry name" value="Homeobox_TF"/>
</dbReference>
<dbReference type="InterPro" id="IPR009057">
    <property type="entry name" value="Homeodomain-like_sf"/>
</dbReference>
<dbReference type="InterPro" id="IPR000047">
    <property type="entry name" value="HTH_motif"/>
</dbReference>
<dbReference type="PANTHER" id="PTHR24333">
    <property type="entry name" value="HOMEO BOX HB9 LIKE A-RELATED"/>
    <property type="match status" value="1"/>
</dbReference>
<dbReference type="PANTHER" id="PTHR24333:SF11">
    <property type="entry name" value="HOMEOBOX PROTEIN BARH-LIKE 1B"/>
    <property type="match status" value="1"/>
</dbReference>
<dbReference type="Pfam" id="PF00046">
    <property type="entry name" value="Homeodomain"/>
    <property type="match status" value="1"/>
</dbReference>
<dbReference type="PRINTS" id="PR00024">
    <property type="entry name" value="HOMEOBOX"/>
</dbReference>
<dbReference type="PRINTS" id="PR00031">
    <property type="entry name" value="HTHREPRESSR"/>
</dbReference>
<dbReference type="SMART" id="SM00389">
    <property type="entry name" value="HOX"/>
    <property type="match status" value="1"/>
</dbReference>
<dbReference type="SUPFAM" id="SSF46689">
    <property type="entry name" value="Homeodomain-like"/>
    <property type="match status" value="1"/>
</dbReference>
<dbReference type="PROSITE" id="PS00027">
    <property type="entry name" value="HOMEOBOX_1"/>
    <property type="match status" value="1"/>
</dbReference>
<dbReference type="PROSITE" id="PS50071">
    <property type="entry name" value="HOMEOBOX_2"/>
    <property type="match status" value="1"/>
</dbReference>
<comment type="function">
    <text evidence="1">Transcription factor, is involved in craniofacial development, and in stomach organogenesis.</text>
</comment>
<comment type="subcellular location">
    <subcellularLocation>
        <location evidence="4">Nucleus</location>
    </subcellularLocation>
</comment>
<comment type="similarity">
    <text evidence="4">Belongs to the BAR homeobox family.</text>
</comment>
<accession>Q503F2</accession>
<accession>A3KNS7</accession>
<accession>Q53B62</accession>
<reference key="1">
    <citation type="submission" date="2004-04" db="EMBL/GenBank/DDBJ databases">
        <title>Danio rerio barH-class homeodomain transcription factor mRNA.</title>
        <authorList>
            <person name="Kim H.-T."/>
            <person name="Yoo K.-W."/>
            <person name="Kim C.-H."/>
        </authorList>
    </citation>
    <scope>NUCLEOTIDE SEQUENCE [MRNA]</scope>
</reference>
<reference key="2">
    <citation type="submission" date="2007-03" db="EMBL/GenBank/DDBJ databases">
        <authorList>
            <consortium name="NIH - Zebrafish Gene Collection (ZGC) project"/>
        </authorList>
    </citation>
    <scope>NUCLEOTIDE SEQUENCE [LARGE SCALE MRNA]</scope>
    <source>
        <tissue>Embryo</tissue>
    </source>
</reference>
<feature type="chain" id="PRO_0000343797" description="Homeobox protein BarH-like 1">
    <location>
        <begin position="1"/>
        <end position="248"/>
    </location>
</feature>
<feature type="DNA-binding region" description="Homeobox" evidence="2">
    <location>
        <begin position="135"/>
        <end position="194"/>
    </location>
</feature>
<feature type="region of interest" description="Disordered" evidence="3">
    <location>
        <begin position="197"/>
        <end position="248"/>
    </location>
</feature>
<feature type="compositionally biased region" description="Basic and acidic residues" evidence="3">
    <location>
        <begin position="223"/>
        <end position="234"/>
    </location>
</feature>
<feature type="compositionally biased region" description="Polar residues" evidence="3">
    <location>
        <begin position="237"/>
        <end position="248"/>
    </location>
</feature>
<feature type="sequence conflict" description="In Ref. 2; AAH95353." evidence="4" ref="2">
    <original>I</original>
    <variation>V</variation>
    <location>
        <position position="42"/>
    </location>
</feature>
<feature type="sequence conflict" description="In Ref. 1; AAU00060." evidence="4" ref="1">
    <original>V</original>
    <variation>G</variation>
    <location>
        <position position="105"/>
    </location>
</feature>
<sequence>MQHPLEIGAHYYPPDAHLDQRSHRYRSFMIEEILTDHPDQKISSPTGDLLKFGVHALLSARPYHNHLVLKADQTGILKFPVSPLSCSLGAPLSSALLSGAAGLQVGSSSHHLPLDLHLRGKLDPGADAVSKTKKGRRSRTVFTELQLMGLEKRFEKQKYLSTPDRIDLAESLGLSQLQVKTWYQNRRMKWKKIVLQGGGLESPTKPKGRPKKNSIPTSEQLSEQERTREADRLSDGGASSLSDANQEE</sequence>
<keyword id="KW-0238">DNA-binding</keyword>
<keyword id="KW-0371">Homeobox</keyword>
<keyword id="KW-0539">Nucleus</keyword>
<keyword id="KW-1185">Reference proteome</keyword>
<keyword id="KW-0804">Transcription</keyword>
<keyword id="KW-0805">Transcription regulation</keyword>
<gene>
    <name type="primary">barx1</name>
    <name type="synonym">barh4</name>
</gene>